<evidence type="ECO:0000250" key="1"/>
<evidence type="ECO:0000255" key="2"/>
<evidence type="ECO:0000255" key="3">
    <source>
        <dbReference type="PROSITE-ProRule" id="PRU00076"/>
    </source>
</evidence>
<evidence type="ECO:0000255" key="4">
    <source>
        <dbReference type="PROSITE-ProRule" id="PRU00274"/>
    </source>
</evidence>
<evidence type="ECO:0000255" key="5">
    <source>
        <dbReference type="PROSITE-ProRule" id="PRU00463"/>
    </source>
</evidence>
<sequence>MAPQLLLCLILTFLWSLPEAESNVFLKSKVANRFLQRTKRANSLFEEFRSGNIERECIEERCSKEEAREVFEDDEKTETFWNVYVDGDQCSSNPCHYRGTCKDGIGSYTCTCLFGYEGKNCERVLYKSCRVDNGNCWHFCKPVQNDIQCSCAEGYLLGEDGHSCVAGGNFSCGRNIKTRNKREASLPDFVQSQNATLLKKSDNPSPDIRIVNGMDCKLGECPWQAVLVDEKEGVFCGGTILSPIYVLTAAHCINQTEKISVVVGEIDKSRVETGHLLSVDKIYVHKKFVPPKKGYKFYEKFDLVSYDYDIAIIQMKTPIQFSENVVPACLPTADFANQVLMKQDFGIISGFGRIFEKGPKSNTLKVLKVPYVDRHTCMVSSESPITPTMFCAGYDTLPRDACQGDSGGPHITAYRDTHFITGIVSWGEGCAKKGKYGIYTKVSKFILWIKRIMRQKLPSTESSTGRL</sequence>
<proteinExistence type="evidence at transcript level"/>
<accession>Q58L95</accession>
<protein>
    <recommendedName>
        <fullName>Venom prothrombin activator omicarin-C catalytic subunit</fullName>
        <shortName>vPA</shortName>
        <ecNumber>3.4.21.6</ecNumber>
    </recommendedName>
    <alternativeName>
        <fullName>Venom coagulation factor Xa-like protease</fullName>
    </alternativeName>
    <component>
        <recommendedName>
            <fullName>Omicarin-C catalytic subunit light chain</fullName>
        </recommendedName>
    </component>
    <component>
        <recommendedName>
            <fullName>Omicarin-C catalytic subunit heavy chain</fullName>
        </recommendedName>
    </component>
</protein>
<organism>
    <name type="scientific">Oxyuranus microlepidotus</name>
    <name type="common">Inland taipan</name>
    <name type="synonym">Diemenia microlepidota</name>
    <dbReference type="NCBI Taxonomy" id="111177"/>
    <lineage>
        <taxon>Eukaryota</taxon>
        <taxon>Metazoa</taxon>
        <taxon>Chordata</taxon>
        <taxon>Craniata</taxon>
        <taxon>Vertebrata</taxon>
        <taxon>Euteleostomi</taxon>
        <taxon>Lepidosauria</taxon>
        <taxon>Squamata</taxon>
        <taxon>Bifurcata</taxon>
        <taxon>Unidentata</taxon>
        <taxon>Episquamata</taxon>
        <taxon>Toxicofera</taxon>
        <taxon>Serpentes</taxon>
        <taxon>Colubroidea</taxon>
        <taxon>Elapidae</taxon>
        <taxon>Hydrophiinae</taxon>
        <taxon>Oxyuranus</taxon>
    </lineage>
</organism>
<feature type="signal peptide" evidence="2">
    <location>
        <begin position="1"/>
        <end position="20"/>
    </location>
</feature>
<feature type="propeptide" id="PRO_0000409889" evidence="1">
    <location>
        <begin position="21"/>
        <end position="40"/>
    </location>
</feature>
<feature type="chain" id="PRO_5000095348" description="Omicarin-C catalytic subunit light chain">
    <location>
        <begin position="41"/>
        <end position="181"/>
    </location>
</feature>
<feature type="propeptide" id="PRO_5000095349" description="Activation peptide" evidence="1">
    <location>
        <begin position="182"/>
        <end position="209"/>
    </location>
</feature>
<feature type="chain" id="PRO_5000095350" description="Omicarin-C catalytic subunit heavy chain">
    <location>
        <begin position="210"/>
        <end position="467"/>
    </location>
</feature>
<feature type="domain" description="Gla" evidence="5">
    <location>
        <begin position="41"/>
        <end position="86"/>
    </location>
</feature>
<feature type="domain" description="EGF-like 1; calcium-binding" evidence="3">
    <location>
        <begin position="86"/>
        <end position="122"/>
    </location>
</feature>
<feature type="domain" description="EGF-like 2" evidence="3">
    <location>
        <begin position="129"/>
        <end position="164"/>
    </location>
</feature>
<feature type="domain" description="Peptidase S1" evidence="4">
    <location>
        <begin position="210"/>
        <end position="454"/>
    </location>
</feature>
<feature type="active site" description="Charge relay system" evidence="1">
    <location>
        <position position="251"/>
    </location>
</feature>
<feature type="active site" description="Charge relay system" evidence="1">
    <location>
        <position position="309"/>
    </location>
</feature>
<feature type="active site" description="Charge relay system" evidence="1">
    <location>
        <position position="406"/>
    </location>
</feature>
<feature type="site" description="Cleavage" evidence="1">
    <location>
        <begin position="209"/>
        <end position="210"/>
    </location>
</feature>
<feature type="modified residue" description="4-carboxyglutamate" evidence="5">
    <location>
        <position position="46"/>
    </location>
</feature>
<feature type="modified residue" description="4-carboxyglutamate" evidence="5">
    <location>
        <position position="47"/>
    </location>
</feature>
<feature type="modified residue" description="4-carboxyglutamate" evidence="5">
    <location>
        <position position="54"/>
    </location>
</feature>
<feature type="modified residue" description="4-carboxyglutamate" evidence="5">
    <location>
        <position position="56"/>
    </location>
</feature>
<feature type="modified residue" description="4-carboxyglutamate" evidence="5">
    <location>
        <position position="59"/>
    </location>
</feature>
<feature type="modified residue" description="4-carboxyglutamate" evidence="5">
    <location>
        <position position="60"/>
    </location>
</feature>
<feature type="modified residue" description="4-carboxyglutamate" evidence="5">
    <location>
        <position position="65"/>
    </location>
</feature>
<feature type="modified residue" description="4-carboxyglutamate" evidence="5">
    <location>
        <position position="66"/>
    </location>
</feature>
<feature type="modified residue" description="4-carboxyglutamate" evidence="5">
    <location>
        <position position="69"/>
    </location>
</feature>
<feature type="modified residue" description="4-carboxyglutamate" evidence="5">
    <location>
        <position position="72"/>
    </location>
</feature>
<feature type="modified residue" description="4-carboxyglutamate" evidence="5">
    <location>
        <position position="75"/>
    </location>
</feature>
<feature type="glycosylation site" description="O-linked (Hex...) serine" evidence="1">
    <location>
        <position position="92"/>
    </location>
</feature>
<feature type="glycosylation site" description="N-linked (GlcNAc...) asparagine" evidence="2">
    <location>
        <position position="254"/>
    </location>
</feature>
<feature type="disulfide bond" evidence="1">
    <location>
        <begin position="57"/>
        <end position="62"/>
    </location>
</feature>
<feature type="disulfide bond" evidence="1">
    <location>
        <begin position="90"/>
        <end position="101"/>
    </location>
</feature>
<feature type="disulfide bond" evidence="1">
    <location>
        <begin position="95"/>
        <end position="110"/>
    </location>
</feature>
<feature type="disulfide bond" evidence="1">
    <location>
        <begin position="112"/>
        <end position="121"/>
    </location>
</feature>
<feature type="disulfide bond" evidence="1">
    <location>
        <begin position="129"/>
        <end position="140"/>
    </location>
</feature>
<feature type="disulfide bond" evidence="1">
    <location>
        <begin position="136"/>
        <end position="149"/>
    </location>
</feature>
<feature type="disulfide bond" evidence="1">
    <location>
        <begin position="151"/>
        <end position="164"/>
    </location>
</feature>
<feature type="disulfide bond" description="Interchain (between light and heavy chains)" evidence="3 4 5">
    <location>
        <begin position="172"/>
        <end position="329"/>
    </location>
</feature>
<feature type="disulfide bond" evidence="1">
    <location>
        <begin position="216"/>
        <end position="221"/>
    </location>
</feature>
<feature type="disulfide bond" evidence="1">
    <location>
        <begin position="236"/>
        <end position="252"/>
    </location>
</feature>
<feature type="disulfide bond" evidence="1">
    <location>
        <begin position="377"/>
        <end position="391"/>
    </location>
</feature>
<feature type="disulfide bond" evidence="1">
    <location>
        <begin position="402"/>
        <end position="430"/>
    </location>
</feature>
<keyword id="KW-1204">Blood coagulation cascade activating toxin</keyword>
<keyword id="KW-0106">Calcium</keyword>
<keyword id="KW-0165">Cleavage on pair of basic residues</keyword>
<keyword id="KW-1015">Disulfide bond</keyword>
<keyword id="KW-0245">EGF-like domain</keyword>
<keyword id="KW-0301">Gamma-carboxyglutamic acid</keyword>
<keyword id="KW-0325">Glycoprotein</keyword>
<keyword id="KW-1199">Hemostasis impairing toxin</keyword>
<keyword id="KW-0378">Hydrolase</keyword>
<keyword id="KW-0645">Protease</keyword>
<keyword id="KW-0655">Prothrombin activator</keyword>
<keyword id="KW-0677">Repeat</keyword>
<keyword id="KW-0964">Secreted</keyword>
<keyword id="KW-0720">Serine protease</keyword>
<keyword id="KW-0732">Signal</keyword>
<keyword id="KW-0800">Toxin</keyword>
<reference key="1">
    <citation type="journal article" date="2005" name="Mol. Biol. Evol.">
        <title>Comparative analysis of prothrombin activators from the venom of Australian elapids.</title>
        <authorList>
            <person name="St Pierre L."/>
            <person name="Masci P.P."/>
            <person name="Filippovich I."/>
            <person name="Sorokina N."/>
            <person name="Marsh N."/>
            <person name="Miller D.J."/>
            <person name="Lavin M.F."/>
        </authorList>
    </citation>
    <scope>NUCLEOTIDE SEQUENCE [MRNA]</scope>
    <source>
        <tissue>Venom gland</tissue>
    </source>
</reference>
<reference key="2">
    <citation type="journal article" date="2001" name="Thromb. Haemost.">
        <title>Classification and nomenclature of prothrombin activators isolated from snake venoms.</title>
        <authorList>
            <person name="Manjunatha Kini R."/>
            <person name="Morita T."/>
            <person name="Rosing J."/>
        </authorList>
    </citation>
    <scope>NOMENCLATURE</scope>
</reference>
<name>FAXC_OXYMI</name>
<comment type="function">
    <text evidence="1">Snake prothrombin activator that attacks the hemostatic system of prey. This catalytic subunit is functionally similar to blood coagulation factor Xa. It requires a non-catalytic subunit present in the venom, which is similar to coagulation factor Va, to be fully active (By similarity).</text>
</comment>
<comment type="catalytic activity">
    <reaction>
        <text>Selective cleavage of Arg-|-Thr and then Arg-|-Ile bonds in prothrombin to form thrombin.</text>
        <dbReference type="EC" id="3.4.21.6"/>
    </reaction>
</comment>
<comment type="activity regulation">
    <text evidence="1">Activated by calcium and negatively charged phospholipids.</text>
</comment>
<comment type="subunit">
    <text evidence="1">Heterodimer of a light and a heavy chains; disulfide-linked. Is associated with omicarin-C non-catalytic subunit (AC Q58L90) in a non-covalent manner (By similarity).</text>
</comment>
<comment type="subcellular location">
    <subcellularLocation>
        <location evidence="1">Secreted</location>
    </subcellularLocation>
</comment>
<comment type="tissue specificity">
    <text>Expressed by the venom gland.</text>
</comment>
<comment type="PTM">
    <text>Gamma-carboxyglutamate residues are formed by vitamin K dependent carboxylation. These residues are essential for the binding of calcium.</text>
</comment>
<comment type="miscellaneous">
    <text>Is classified in the group C of snake venom prothrombin activators, since it does not require the mammalian factor Va for the cleavage of prothrombin as the venom contains its own non-catalytic factor Va-like molecule.</text>
</comment>
<comment type="miscellaneous">
    <text>In contrast to blood coagulation factors that circulate as inactive zymogen in plasma, venom prothrombin activators are always found in the active form in the venom. Hence, catalytic and non-catalytic subunits are found naturally in venom as stable complexes.</text>
</comment>
<comment type="similarity">
    <text evidence="4">Belongs to the peptidase S1 family. Snake venom subfamily.</text>
</comment>
<dbReference type="EC" id="3.4.21.6"/>
<dbReference type="EMBL" id="AY940205">
    <property type="protein sequence ID" value="AAX37261.1"/>
    <property type="molecule type" value="mRNA"/>
</dbReference>
<dbReference type="SMR" id="Q58L95"/>
<dbReference type="MEROPS" id="S01.446"/>
<dbReference type="GO" id="GO:0005576">
    <property type="term" value="C:extracellular region"/>
    <property type="evidence" value="ECO:0000250"/>
    <property type="project" value="UniProtKB"/>
</dbReference>
<dbReference type="GO" id="GO:0005615">
    <property type="term" value="C:extracellular space"/>
    <property type="evidence" value="ECO:0007669"/>
    <property type="project" value="TreeGrafter"/>
</dbReference>
<dbReference type="GO" id="GO:0005509">
    <property type="term" value="F:calcium ion binding"/>
    <property type="evidence" value="ECO:0007669"/>
    <property type="project" value="InterPro"/>
</dbReference>
<dbReference type="GO" id="GO:0016504">
    <property type="term" value="F:peptidase activator activity"/>
    <property type="evidence" value="ECO:0007669"/>
    <property type="project" value="UniProtKB-KW"/>
</dbReference>
<dbReference type="GO" id="GO:0004252">
    <property type="term" value="F:serine-type endopeptidase activity"/>
    <property type="evidence" value="ECO:0000250"/>
    <property type="project" value="UniProtKB"/>
</dbReference>
<dbReference type="GO" id="GO:0090729">
    <property type="term" value="F:toxin activity"/>
    <property type="evidence" value="ECO:0007669"/>
    <property type="project" value="UniProtKB-KW"/>
</dbReference>
<dbReference type="GO" id="GO:0007596">
    <property type="term" value="P:blood coagulation"/>
    <property type="evidence" value="ECO:0007669"/>
    <property type="project" value="InterPro"/>
</dbReference>
<dbReference type="GO" id="GO:0035807">
    <property type="term" value="P:induction of blood coagulation in another organism"/>
    <property type="evidence" value="ECO:0007669"/>
    <property type="project" value="UniProtKB-ARBA"/>
</dbReference>
<dbReference type="GO" id="GO:0006508">
    <property type="term" value="P:proteolysis"/>
    <property type="evidence" value="ECO:0007669"/>
    <property type="project" value="UniProtKB-KW"/>
</dbReference>
<dbReference type="GO" id="GO:0044469">
    <property type="term" value="P:venom-mediated blood coagulation"/>
    <property type="evidence" value="ECO:0000250"/>
    <property type="project" value="UniProtKB"/>
</dbReference>
<dbReference type="CDD" id="cd00054">
    <property type="entry name" value="EGF_CA"/>
    <property type="match status" value="1"/>
</dbReference>
<dbReference type="CDD" id="cd00190">
    <property type="entry name" value="Tryp_SPc"/>
    <property type="match status" value="1"/>
</dbReference>
<dbReference type="FunFam" id="2.10.25.10:FF:000513">
    <property type="entry name" value="Coagulation factor VII"/>
    <property type="match status" value="1"/>
</dbReference>
<dbReference type="FunFam" id="2.40.10.10:FF:000013">
    <property type="entry name" value="Coagulation factor X"/>
    <property type="match status" value="1"/>
</dbReference>
<dbReference type="FunFam" id="2.10.25.10:FF:000162">
    <property type="entry name" value="Coagulation factor X (Predicted)"/>
    <property type="match status" value="1"/>
</dbReference>
<dbReference type="FunFam" id="4.10.740.10:FF:000001">
    <property type="entry name" value="vitamin K-dependent protein S"/>
    <property type="match status" value="1"/>
</dbReference>
<dbReference type="Gene3D" id="4.10.740.10">
    <property type="entry name" value="Coagulation Factor IX"/>
    <property type="match status" value="1"/>
</dbReference>
<dbReference type="Gene3D" id="2.10.25.10">
    <property type="entry name" value="Laminin"/>
    <property type="match status" value="2"/>
</dbReference>
<dbReference type="Gene3D" id="2.40.10.10">
    <property type="entry name" value="Trypsin-like serine proteases"/>
    <property type="match status" value="2"/>
</dbReference>
<dbReference type="InterPro" id="IPR017857">
    <property type="entry name" value="Coagulation_fac-like_Gla_dom"/>
</dbReference>
<dbReference type="InterPro" id="IPR001881">
    <property type="entry name" value="EGF-like_Ca-bd_dom"/>
</dbReference>
<dbReference type="InterPro" id="IPR000742">
    <property type="entry name" value="EGF-like_dom"/>
</dbReference>
<dbReference type="InterPro" id="IPR000152">
    <property type="entry name" value="EGF-type_Asp/Asn_hydroxyl_site"/>
</dbReference>
<dbReference type="InterPro" id="IPR018097">
    <property type="entry name" value="EGF_Ca-bd_CS"/>
</dbReference>
<dbReference type="InterPro" id="IPR035972">
    <property type="entry name" value="GLA-like_dom_SF"/>
</dbReference>
<dbReference type="InterPro" id="IPR000294">
    <property type="entry name" value="GLA_domain"/>
</dbReference>
<dbReference type="InterPro" id="IPR012224">
    <property type="entry name" value="Pept_S1A_FX"/>
</dbReference>
<dbReference type="InterPro" id="IPR050442">
    <property type="entry name" value="Peptidase_S1_coag_factors"/>
</dbReference>
<dbReference type="InterPro" id="IPR009003">
    <property type="entry name" value="Peptidase_S1_PA"/>
</dbReference>
<dbReference type="InterPro" id="IPR043504">
    <property type="entry name" value="Peptidase_S1_PA_chymotrypsin"/>
</dbReference>
<dbReference type="InterPro" id="IPR001314">
    <property type="entry name" value="Peptidase_S1A"/>
</dbReference>
<dbReference type="InterPro" id="IPR001254">
    <property type="entry name" value="Trypsin_dom"/>
</dbReference>
<dbReference type="InterPro" id="IPR018114">
    <property type="entry name" value="TRYPSIN_HIS"/>
</dbReference>
<dbReference type="InterPro" id="IPR033116">
    <property type="entry name" value="TRYPSIN_SER"/>
</dbReference>
<dbReference type="PANTHER" id="PTHR24278">
    <property type="entry name" value="COAGULATION FACTOR"/>
    <property type="match status" value="1"/>
</dbReference>
<dbReference type="PANTHER" id="PTHR24278:SF28">
    <property type="entry name" value="COAGULATION FACTOR X"/>
    <property type="match status" value="1"/>
</dbReference>
<dbReference type="Pfam" id="PF00008">
    <property type="entry name" value="EGF"/>
    <property type="match status" value="1"/>
</dbReference>
<dbReference type="Pfam" id="PF14670">
    <property type="entry name" value="FXa_inhibition"/>
    <property type="match status" value="1"/>
</dbReference>
<dbReference type="Pfam" id="PF00594">
    <property type="entry name" value="Gla"/>
    <property type="match status" value="1"/>
</dbReference>
<dbReference type="Pfam" id="PF00089">
    <property type="entry name" value="Trypsin"/>
    <property type="match status" value="1"/>
</dbReference>
<dbReference type="PIRSF" id="PIRSF001143">
    <property type="entry name" value="Factor_X"/>
    <property type="match status" value="1"/>
</dbReference>
<dbReference type="PRINTS" id="PR00722">
    <property type="entry name" value="CHYMOTRYPSIN"/>
</dbReference>
<dbReference type="PRINTS" id="PR00001">
    <property type="entry name" value="GLABLOOD"/>
</dbReference>
<dbReference type="SMART" id="SM00181">
    <property type="entry name" value="EGF"/>
    <property type="match status" value="2"/>
</dbReference>
<dbReference type="SMART" id="SM00179">
    <property type="entry name" value="EGF_CA"/>
    <property type="match status" value="1"/>
</dbReference>
<dbReference type="SMART" id="SM00069">
    <property type="entry name" value="GLA"/>
    <property type="match status" value="1"/>
</dbReference>
<dbReference type="SMART" id="SM00020">
    <property type="entry name" value="Tryp_SPc"/>
    <property type="match status" value="1"/>
</dbReference>
<dbReference type="SUPFAM" id="SSF57630">
    <property type="entry name" value="GLA-domain"/>
    <property type="match status" value="1"/>
</dbReference>
<dbReference type="SUPFAM" id="SSF50494">
    <property type="entry name" value="Trypsin-like serine proteases"/>
    <property type="match status" value="1"/>
</dbReference>
<dbReference type="PROSITE" id="PS00010">
    <property type="entry name" value="ASX_HYDROXYL"/>
    <property type="match status" value="1"/>
</dbReference>
<dbReference type="PROSITE" id="PS00022">
    <property type="entry name" value="EGF_1"/>
    <property type="match status" value="1"/>
</dbReference>
<dbReference type="PROSITE" id="PS01186">
    <property type="entry name" value="EGF_2"/>
    <property type="match status" value="2"/>
</dbReference>
<dbReference type="PROSITE" id="PS50026">
    <property type="entry name" value="EGF_3"/>
    <property type="match status" value="1"/>
</dbReference>
<dbReference type="PROSITE" id="PS01187">
    <property type="entry name" value="EGF_CA"/>
    <property type="match status" value="1"/>
</dbReference>
<dbReference type="PROSITE" id="PS00011">
    <property type="entry name" value="GLA_1"/>
    <property type="match status" value="1"/>
</dbReference>
<dbReference type="PROSITE" id="PS50998">
    <property type="entry name" value="GLA_2"/>
    <property type="match status" value="1"/>
</dbReference>
<dbReference type="PROSITE" id="PS50240">
    <property type="entry name" value="TRYPSIN_DOM"/>
    <property type="match status" value="1"/>
</dbReference>
<dbReference type="PROSITE" id="PS00134">
    <property type="entry name" value="TRYPSIN_HIS"/>
    <property type="match status" value="1"/>
</dbReference>
<dbReference type="PROSITE" id="PS00135">
    <property type="entry name" value="TRYPSIN_SER"/>
    <property type="match status" value="1"/>
</dbReference>